<protein>
    <recommendedName>
        <fullName evidence="5">UDP-N-acetylglucosamine/UDP-N-acetylgalactosamine transporter nstp-4</fullName>
    </recommendedName>
    <alternativeName>
        <fullName evidence="8">Nucleotide sugar transporter protein nstp-4</fullName>
    </alternativeName>
    <alternativeName>
        <fullName evidence="6">Solute carrier family 35 protein nstp-4</fullName>
    </alternativeName>
</protein>
<keyword id="KW-0333">Golgi apparatus</keyword>
<keyword id="KW-0472">Membrane</keyword>
<keyword id="KW-1185">Reference proteome</keyword>
<keyword id="KW-0762">Sugar transport</keyword>
<keyword id="KW-0812">Transmembrane</keyword>
<keyword id="KW-1133">Transmembrane helix</keyword>
<keyword id="KW-0813">Transport</keyword>
<comment type="function">
    <text evidence="3 4">Uridine diphosphate-N-acetylglucosamine (UDP-GlcNAc) transporter in the Golgi apparatus (PubMed:17060606). UDP-N-acetylgalactosamine (UDP-GalNAc) transporter in the Golgi apparatus (PubMed:17060606). Apparently transports UDP-GlcNAc and UDP-GalNAc simultaneously, and independently, by an unknown mechanism (PubMed:17060606). Functions redundantly with nucleotide sugar transporter srf-3 (PubMed:17652078). May be involved in gonadal development (PubMed:17652078).</text>
</comment>
<comment type="biophysicochemical properties">
    <kinetics>
        <KM evidence="3">25.2 uM for uridine diphosphate-N-acetylglucosamine as substrate (at 25 degrees Celsius)</KM>
        <KM evidence="3">24.9 uM for uridine diphosphate-N-acetylgalactosamine as substrate (at 25 degrees Celsius)</KM>
    </kinetics>
</comment>
<comment type="subcellular location">
    <subcellularLocation>
        <location evidence="1">Golgi apparatus membrane</location>
        <topology evidence="2">Multi-pass membrane protein</topology>
    </subcellularLocation>
</comment>
<comment type="tissue specificity">
    <text evidence="4">Widely expressed, including in pharynx and pharyngeal gland cells, seam cells, spermatheca, stomatointestinal muscle, vulva, and body wall muscle.</text>
</comment>
<comment type="disruption phenotype">
    <text evidence="4">RNAi-mediated knockdown causes no obvious morphological defects (PubMed:17652078). In an srf-3 mutant background, causes accumulation of oocytes in the proximal gonad arms and abnormal gonad arms, such as twists and overturns (PubMed:17652078).</text>
</comment>
<comment type="similarity">
    <text evidence="6">Belongs to the nucleotide-sugar transporter family. SLC35A subfamily.</text>
</comment>
<name>S35A3_CAEEL</name>
<proteinExistence type="evidence at protein level"/>
<reference evidence="7" key="1">
    <citation type="journal article" date="1998" name="Science">
        <title>Genome sequence of the nematode C. elegans: a platform for investigating biology.</title>
        <authorList>
            <consortium name="The C. elegans sequencing consortium"/>
        </authorList>
    </citation>
    <scope>NUCLEOTIDE SEQUENCE [LARGE SCALE GENOMIC DNA]</scope>
    <source>
        <strain evidence="7">Bristol N2</strain>
    </source>
</reference>
<reference evidence="6" key="2">
    <citation type="journal article" date="2006" name="Proc. Natl. Acad. Sci. U.S.A.">
        <title>Independent and simultaneous translocation of two substrates by a nucleotide sugar transporter.</title>
        <authorList>
            <person name="Caffaro C.E."/>
            <person name="Hirschberg C.B."/>
            <person name="Berninsone P.M."/>
        </authorList>
    </citation>
    <scope>FUNCTION</scope>
    <scope>BIOPHYSICOCHEMICAL PROPERTIES</scope>
    <scope>MUTAGENESIS OF 119-ALA--ALA-134; VAL-192 AND GLY-267</scope>
</reference>
<reference evidence="6" key="3">
    <citation type="journal article" date="2007" name="J. Biol. Chem.">
        <title>Functional redundancy between two Caenorhabditis elegans nucleotide sugar transporters with a novel transport mechanism.</title>
        <authorList>
            <person name="Caffaro C.E."/>
            <person name="Hirschberg C.B."/>
            <person name="Berninsone P.M."/>
        </authorList>
    </citation>
    <scope>FUNCTION</scope>
    <scope>TISSUE SPECIFICITY</scope>
    <scope>DISRUPTION PHENOTYPE</scope>
</reference>
<evidence type="ECO:0000250" key="1">
    <source>
        <dbReference type="UniProtKB" id="Q9Y2D2"/>
    </source>
</evidence>
<evidence type="ECO:0000255" key="2"/>
<evidence type="ECO:0000269" key="3">
    <source>
    </source>
</evidence>
<evidence type="ECO:0000269" key="4">
    <source>
    </source>
</evidence>
<evidence type="ECO:0000303" key="5">
    <source>
    </source>
</evidence>
<evidence type="ECO:0000305" key="6"/>
<evidence type="ECO:0000312" key="7">
    <source>
        <dbReference type="Proteomes" id="UP000001940"/>
    </source>
</evidence>
<evidence type="ECO:0000312" key="8">
    <source>
        <dbReference type="WormBase" id="C03H5.2"/>
    </source>
</evidence>
<accession>O16658</accession>
<dbReference type="EMBL" id="BX284602">
    <property type="protein sequence ID" value="CCD62819.1"/>
    <property type="molecule type" value="Genomic_DNA"/>
</dbReference>
<dbReference type="PIR" id="T32030">
    <property type="entry name" value="T32030"/>
</dbReference>
<dbReference type="RefSeq" id="NP_493723.3">
    <property type="nucleotide sequence ID" value="NM_061322.7"/>
</dbReference>
<dbReference type="SMR" id="O16658"/>
<dbReference type="FunCoup" id="O16658">
    <property type="interactions" value="954"/>
</dbReference>
<dbReference type="IntAct" id="O16658">
    <property type="interactions" value="3"/>
</dbReference>
<dbReference type="STRING" id="6239.C03H5.2.1"/>
<dbReference type="TCDB" id="2.A.7.12.9">
    <property type="family name" value="the drug/metabolite transporter (dmt) superfamily"/>
</dbReference>
<dbReference type="PaxDb" id="6239-C03H5.2"/>
<dbReference type="PeptideAtlas" id="O16658"/>
<dbReference type="EnsemblMetazoa" id="C03H5.2.1">
    <property type="protein sequence ID" value="C03H5.2.1"/>
    <property type="gene ID" value="WBGene00015404"/>
</dbReference>
<dbReference type="GeneID" id="173428"/>
<dbReference type="KEGG" id="cel:CELE_C03H5.2"/>
<dbReference type="UCSC" id="C03H5.2">
    <property type="organism name" value="c. elegans"/>
</dbReference>
<dbReference type="AGR" id="WB:WBGene00015404"/>
<dbReference type="CTD" id="173428"/>
<dbReference type="WormBase" id="C03H5.2">
    <property type="protein sequence ID" value="CE32110"/>
    <property type="gene ID" value="WBGene00015404"/>
    <property type="gene designation" value="nstp-4"/>
</dbReference>
<dbReference type="eggNOG" id="KOG2234">
    <property type="taxonomic scope" value="Eukaryota"/>
</dbReference>
<dbReference type="GeneTree" id="ENSGT00950000182827"/>
<dbReference type="HOGENOM" id="CLU_024645_1_0_1"/>
<dbReference type="InParanoid" id="O16658"/>
<dbReference type="OMA" id="AIMYVIQ"/>
<dbReference type="OrthoDB" id="408493at2759"/>
<dbReference type="PhylomeDB" id="O16658"/>
<dbReference type="Reactome" id="R-CEL-727802">
    <property type="pathway name" value="Transport of nucleotide sugars"/>
</dbReference>
<dbReference type="PRO" id="PR:O16658"/>
<dbReference type="Proteomes" id="UP000001940">
    <property type="component" value="Chromosome II"/>
</dbReference>
<dbReference type="Bgee" id="WBGene00015404">
    <property type="expression patterns" value="Expressed in larva and 4 other cell types or tissues"/>
</dbReference>
<dbReference type="GO" id="GO:0000139">
    <property type="term" value="C:Golgi membrane"/>
    <property type="evidence" value="ECO:0000314"/>
    <property type="project" value="UniProtKB"/>
</dbReference>
<dbReference type="GO" id="GO:0005459">
    <property type="term" value="F:UDP-galactose transmembrane transporter activity"/>
    <property type="evidence" value="ECO:0000318"/>
    <property type="project" value="GO_Central"/>
</dbReference>
<dbReference type="GO" id="GO:0005463">
    <property type="term" value="F:UDP-N-acetylgalactosamine transmembrane transporter activity"/>
    <property type="evidence" value="ECO:0000314"/>
    <property type="project" value="UniProtKB"/>
</dbReference>
<dbReference type="GO" id="GO:0005462">
    <property type="term" value="F:UDP-N-acetylglucosamine transmembrane transporter activity"/>
    <property type="evidence" value="ECO:0000314"/>
    <property type="project" value="UniProtKB"/>
</dbReference>
<dbReference type="GO" id="GO:0055085">
    <property type="term" value="P:transmembrane transport"/>
    <property type="evidence" value="ECO:0000318"/>
    <property type="project" value="GO_Central"/>
</dbReference>
<dbReference type="GO" id="GO:0015789">
    <property type="term" value="P:UDP-N-acetylgalactosamine transmembrane transport"/>
    <property type="evidence" value="ECO:0000314"/>
    <property type="project" value="UniProtKB"/>
</dbReference>
<dbReference type="GO" id="GO:1990569">
    <property type="term" value="P:UDP-N-acetylglucosamine transmembrane transport"/>
    <property type="evidence" value="ECO:0000314"/>
    <property type="project" value="UniProtKB"/>
</dbReference>
<dbReference type="FunFam" id="1.10.3730.20:FF:000037">
    <property type="entry name" value="Nucleotide Sugar TransPorter family"/>
    <property type="match status" value="1"/>
</dbReference>
<dbReference type="Gene3D" id="1.10.3730.20">
    <property type="match status" value="1"/>
</dbReference>
<dbReference type="InterPro" id="IPR007271">
    <property type="entry name" value="Nuc_sug_transpt"/>
</dbReference>
<dbReference type="NCBIfam" id="TIGR00803">
    <property type="entry name" value="nst"/>
    <property type="match status" value="1"/>
</dbReference>
<dbReference type="PANTHER" id="PTHR10231">
    <property type="entry name" value="NUCLEOTIDE-SUGAR TRANSMEMBRANE TRANSPORTER"/>
    <property type="match status" value="1"/>
</dbReference>
<dbReference type="Pfam" id="PF04142">
    <property type="entry name" value="Nuc_sug_transp"/>
    <property type="match status" value="1"/>
</dbReference>
<dbReference type="PIRSF" id="PIRSF005799">
    <property type="entry name" value="UDP-gal_transpt"/>
    <property type="match status" value="1"/>
</dbReference>
<dbReference type="SUPFAM" id="SSF103481">
    <property type="entry name" value="Multidrug resistance efflux transporter EmrE"/>
    <property type="match status" value="1"/>
</dbReference>
<organism evidence="7">
    <name type="scientific">Caenorhabditis elegans</name>
    <dbReference type="NCBI Taxonomy" id="6239"/>
    <lineage>
        <taxon>Eukaryota</taxon>
        <taxon>Metazoa</taxon>
        <taxon>Ecdysozoa</taxon>
        <taxon>Nematoda</taxon>
        <taxon>Chromadorea</taxon>
        <taxon>Rhabditida</taxon>
        <taxon>Rhabditina</taxon>
        <taxon>Rhabditomorpha</taxon>
        <taxon>Rhabditoidea</taxon>
        <taxon>Rhabditidae</taxon>
        <taxon>Peloderinae</taxon>
        <taxon>Caenorhabditis</taxon>
    </lineage>
</organism>
<sequence>MNRANDTSSNLKLISLVVLIVQTTALVLTLRYSQTQKSEGPRYLSSTAVVCAEIIKLITCFFVIYRNNGYRFSGMLNELNREIFASPQTRADSLKVAVPAIMYVIQNNLLFFALKKLDAATYQVTYQLKILTTAIFSVTMLGKSLHRYNWMALILLTAGVALVQYPSGDSTTSKSTAAEHDASDNILGLGAVLAACFSSGFAGVYFEKILKTSKVSLWIRNIQLAFFSVFGALLVCWLYDWQAISDDGFLRGYNGVIWIVVLLQAYGGLVIALVVKYADNILKGFAVSLSIILSSFTSWLVLGDLTITTTFAIGATVVIFATFLYGHEPKSTPAEAHNA</sequence>
<feature type="chain" id="PRO_0000457706" description="UDP-N-acetylglucosamine/UDP-N-acetylgalactosamine transporter nstp-4">
    <location>
        <begin position="1"/>
        <end position="339"/>
    </location>
</feature>
<feature type="transmembrane region" description="Helical" evidence="2">
    <location>
        <begin position="44"/>
        <end position="64"/>
    </location>
</feature>
<feature type="transmembrane region" description="Helical" evidence="2">
    <location>
        <begin position="94"/>
        <end position="114"/>
    </location>
</feature>
<feature type="transmembrane region" description="Helical" evidence="2">
    <location>
        <begin position="148"/>
        <end position="168"/>
    </location>
</feature>
<feature type="transmembrane region" description="Helical" evidence="2">
    <location>
        <begin position="186"/>
        <end position="206"/>
    </location>
</feature>
<feature type="transmembrane region" description="Helical" evidence="2">
    <location>
        <begin position="224"/>
        <end position="244"/>
    </location>
</feature>
<feature type="transmembrane region" description="Helical" evidence="2">
    <location>
        <begin position="255"/>
        <end position="275"/>
    </location>
</feature>
<feature type="transmembrane region" description="Helical" evidence="2">
    <location>
        <begin position="281"/>
        <end position="301"/>
    </location>
</feature>
<feature type="transmembrane region" description="Helical" evidence="2">
    <location>
        <begin position="305"/>
        <end position="325"/>
    </location>
</feature>
<feature type="mutagenesis site" description="Transport of UDP-GalNAc severely impaired, but transport of UDP-GlcNAc virtually unaffected." evidence="3">
    <location>
        <begin position="119"/>
        <end position="134"/>
    </location>
</feature>
<feature type="mutagenesis site" description="Significantly reduces transport of UDP-GalNAc and UDP-GlcNAc into vesicles." evidence="3">
    <original>V</original>
    <variation>F</variation>
    <location>
        <position position="192"/>
    </location>
</feature>
<feature type="mutagenesis site" description="Significantly reduces transport of UDP-GalNAc and UDP-GlcNAc into vesicles." evidence="3">
    <original>G</original>
    <variation>E</variation>
    <location>
        <position position="267"/>
    </location>
</feature>
<gene>
    <name evidence="8" type="primary">nstp-4</name>
    <name evidence="8" type="ORF">C03H5.2</name>
</gene>